<organism>
    <name type="scientific">Acidovorax ebreus (strain TPSY)</name>
    <name type="common">Diaphorobacter sp. (strain TPSY)</name>
    <dbReference type="NCBI Taxonomy" id="535289"/>
    <lineage>
        <taxon>Bacteria</taxon>
        <taxon>Pseudomonadati</taxon>
        <taxon>Pseudomonadota</taxon>
        <taxon>Betaproteobacteria</taxon>
        <taxon>Burkholderiales</taxon>
        <taxon>Comamonadaceae</taxon>
        <taxon>Diaphorobacter</taxon>
    </lineage>
</organism>
<dbReference type="EC" id="2.5.1.141" evidence="1"/>
<dbReference type="EMBL" id="CP001392">
    <property type="protein sequence ID" value="ACM34284.1"/>
    <property type="molecule type" value="Genomic_DNA"/>
</dbReference>
<dbReference type="SMR" id="B9MF14"/>
<dbReference type="KEGG" id="dia:Dtpsy_2850"/>
<dbReference type="eggNOG" id="COG0109">
    <property type="taxonomic scope" value="Bacteria"/>
</dbReference>
<dbReference type="HOGENOM" id="CLU_029631_0_2_4"/>
<dbReference type="UniPathway" id="UPA00834">
    <property type="reaction ID" value="UER00712"/>
</dbReference>
<dbReference type="Proteomes" id="UP000000450">
    <property type="component" value="Chromosome"/>
</dbReference>
<dbReference type="GO" id="GO:0005886">
    <property type="term" value="C:plasma membrane"/>
    <property type="evidence" value="ECO:0007669"/>
    <property type="project" value="UniProtKB-SubCell"/>
</dbReference>
<dbReference type="GO" id="GO:0008495">
    <property type="term" value="F:protoheme IX farnesyltransferase activity"/>
    <property type="evidence" value="ECO:0007669"/>
    <property type="project" value="UniProtKB-UniRule"/>
</dbReference>
<dbReference type="GO" id="GO:0048034">
    <property type="term" value="P:heme O biosynthetic process"/>
    <property type="evidence" value="ECO:0007669"/>
    <property type="project" value="UniProtKB-UniRule"/>
</dbReference>
<dbReference type="CDD" id="cd13957">
    <property type="entry name" value="PT_UbiA_Cox10"/>
    <property type="match status" value="1"/>
</dbReference>
<dbReference type="Gene3D" id="1.10.357.140">
    <property type="entry name" value="UbiA prenyltransferase"/>
    <property type="match status" value="1"/>
</dbReference>
<dbReference type="HAMAP" id="MF_00154">
    <property type="entry name" value="CyoE_CtaB"/>
    <property type="match status" value="1"/>
</dbReference>
<dbReference type="InterPro" id="IPR006369">
    <property type="entry name" value="Protohaem_IX_farnesylTrfase"/>
</dbReference>
<dbReference type="InterPro" id="IPR000537">
    <property type="entry name" value="UbiA_prenyltransferase"/>
</dbReference>
<dbReference type="InterPro" id="IPR030470">
    <property type="entry name" value="UbiA_prenylTrfase_CS"/>
</dbReference>
<dbReference type="InterPro" id="IPR044878">
    <property type="entry name" value="UbiA_sf"/>
</dbReference>
<dbReference type="NCBIfam" id="TIGR01473">
    <property type="entry name" value="cyoE_ctaB"/>
    <property type="match status" value="1"/>
</dbReference>
<dbReference type="NCBIfam" id="NF003349">
    <property type="entry name" value="PRK04375.1-2"/>
    <property type="match status" value="1"/>
</dbReference>
<dbReference type="PANTHER" id="PTHR43448:SF7">
    <property type="entry name" value="4-HYDROXYBENZOATE SOLANESYLTRANSFERASE"/>
    <property type="match status" value="1"/>
</dbReference>
<dbReference type="PANTHER" id="PTHR43448">
    <property type="entry name" value="PROTOHEME IX FARNESYLTRANSFERASE, MITOCHONDRIAL"/>
    <property type="match status" value="1"/>
</dbReference>
<dbReference type="Pfam" id="PF01040">
    <property type="entry name" value="UbiA"/>
    <property type="match status" value="1"/>
</dbReference>
<dbReference type="PROSITE" id="PS00943">
    <property type="entry name" value="UBIA"/>
    <property type="match status" value="1"/>
</dbReference>
<keyword id="KW-0997">Cell inner membrane</keyword>
<keyword id="KW-1003">Cell membrane</keyword>
<keyword id="KW-0350">Heme biosynthesis</keyword>
<keyword id="KW-0472">Membrane</keyword>
<keyword id="KW-1185">Reference proteome</keyword>
<keyword id="KW-0808">Transferase</keyword>
<keyword id="KW-0812">Transmembrane</keyword>
<keyword id="KW-1133">Transmembrane helix</keyword>
<sequence>MSAAPAPAPAAAAPRALPSRLSQFYALTKPRVVQLIVFCAFIGMVLAVPGMPSGAQWALMAVASAGIWLVAGAAAAFNCIVEQGIDAKMKRTAWRPTAKGELSNTQTLLFSALLCAAGSALLYWWVNPLTMWLTFATFVGYAVIYTVILKPLTPQNIVIGGASGAMPPVLGWAAMTGEVGPEALILFLIIFLWTPPHFWALALYRVEDYRKSGLPMLPVTHGNEFTRLQVFLYTLILFAGCLMPFVYGMSSWIYLAAAVVLSAGFCLYGFRLWRDYSDTLARKTFRFSLIHLSLLFAALLVDHYLL</sequence>
<proteinExistence type="inferred from homology"/>
<reference key="1">
    <citation type="submission" date="2009-01" db="EMBL/GenBank/DDBJ databases">
        <title>Complete sequence of Diaphorobacter sp. TPSY.</title>
        <authorList>
            <consortium name="US DOE Joint Genome Institute"/>
            <person name="Lucas S."/>
            <person name="Copeland A."/>
            <person name="Lapidus A."/>
            <person name="Glavina del Rio T."/>
            <person name="Tice H."/>
            <person name="Bruce D."/>
            <person name="Goodwin L."/>
            <person name="Pitluck S."/>
            <person name="Chertkov O."/>
            <person name="Brettin T."/>
            <person name="Detter J.C."/>
            <person name="Han C."/>
            <person name="Larimer F."/>
            <person name="Land M."/>
            <person name="Hauser L."/>
            <person name="Kyrpides N."/>
            <person name="Mikhailova N."/>
            <person name="Coates J.D."/>
        </authorList>
    </citation>
    <scope>NUCLEOTIDE SEQUENCE [LARGE SCALE GENOMIC DNA]</scope>
    <source>
        <strain>TPSY</strain>
    </source>
</reference>
<comment type="function">
    <text evidence="1">Converts heme B (protoheme IX) to heme O by substitution of the vinyl group on carbon 2 of heme B porphyrin ring with a hydroxyethyl farnesyl side group.</text>
</comment>
<comment type="catalytic activity">
    <reaction evidence="1">
        <text>heme b + (2E,6E)-farnesyl diphosphate + H2O = Fe(II)-heme o + diphosphate</text>
        <dbReference type="Rhea" id="RHEA:28070"/>
        <dbReference type="ChEBI" id="CHEBI:15377"/>
        <dbReference type="ChEBI" id="CHEBI:33019"/>
        <dbReference type="ChEBI" id="CHEBI:60344"/>
        <dbReference type="ChEBI" id="CHEBI:60530"/>
        <dbReference type="ChEBI" id="CHEBI:175763"/>
        <dbReference type="EC" id="2.5.1.141"/>
    </reaction>
</comment>
<comment type="pathway">
    <text evidence="1">Porphyrin-containing compound metabolism; heme O biosynthesis; heme O from protoheme: step 1/1.</text>
</comment>
<comment type="subcellular location">
    <subcellularLocation>
        <location evidence="1">Cell inner membrane</location>
        <topology evidence="1">Multi-pass membrane protein</topology>
    </subcellularLocation>
</comment>
<comment type="miscellaneous">
    <text evidence="1">Carbon 2 of the heme B porphyrin ring is defined according to the Fischer nomenclature.</text>
</comment>
<comment type="similarity">
    <text evidence="1">Belongs to the UbiA prenyltransferase family. Protoheme IX farnesyltransferase subfamily.</text>
</comment>
<name>COXX_ACIET</name>
<protein>
    <recommendedName>
        <fullName evidence="1">Protoheme IX farnesyltransferase</fullName>
        <ecNumber evidence="1">2.5.1.141</ecNumber>
    </recommendedName>
    <alternativeName>
        <fullName evidence="1">Heme B farnesyltransferase</fullName>
    </alternativeName>
    <alternativeName>
        <fullName evidence="1">Heme O synthase</fullName>
    </alternativeName>
</protein>
<accession>B9MF14</accession>
<evidence type="ECO:0000255" key="1">
    <source>
        <dbReference type="HAMAP-Rule" id="MF_00154"/>
    </source>
</evidence>
<gene>
    <name evidence="1" type="primary">ctaB</name>
    <name type="ordered locus">Dtpsy_2850</name>
</gene>
<feature type="chain" id="PRO_1000199651" description="Protoheme IX farnesyltransferase">
    <location>
        <begin position="1"/>
        <end position="306"/>
    </location>
</feature>
<feature type="transmembrane region" description="Helical" evidence="1">
    <location>
        <begin position="32"/>
        <end position="52"/>
    </location>
</feature>
<feature type="transmembrane region" description="Helical" evidence="1">
    <location>
        <begin position="57"/>
        <end position="77"/>
    </location>
</feature>
<feature type="transmembrane region" description="Helical" evidence="1">
    <location>
        <begin position="108"/>
        <end position="128"/>
    </location>
</feature>
<feature type="transmembrane region" description="Helical" evidence="1">
    <location>
        <begin position="129"/>
        <end position="149"/>
    </location>
</feature>
<feature type="transmembrane region" description="Helical" evidence="1">
    <location>
        <begin position="157"/>
        <end position="177"/>
    </location>
</feature>
<feature type="transmembrane region" description="Helical" evidence="1">
    <location>
        <begin position="183"/>
        <end position="203"/>
    </location>
</feature>
<feature type="transmembrane region" description="Helical" evidence="1">
    <location>
        <begin position="230"/>
        <end position="250"/>
    </location>
</feature>
<feature type="transmembrane region" description="Helical" evidence="1">
    <location>
        <begin position="252"/>
        <end position="272"/>
    </location>
</feature>
<feature type="transmembrane region" description="Helical" evidence="1">
    <location>
        <begin position="285"/>
        <end position="305"/>
    </location>
</feature>